<comment type="function">
    <text evidence="1">Specifically methylates guanosine-37 in various tRNAs.</text>
</comment>
<comment type="catalytic activity">
    <reaction evidence="1">
        <text>guanosine(37) in tRNA + S-adenosyl-L-methionine = N(1)-methylguanosine(37) in tRNA + S-adenosyl-L-homocysteine + H(+)</text>
        <dbReference type="Rhea" id="RHEA:36899"/>
        <dbReference type="Rhea" id="RHEA-COMP:10145"/>
        <dbReference type="Rhea" id="RHEA-COMP:10147"/>
        <dbReference type="ChEBI" id="CHEBI:15378"/>
        <dbReference type="ChEBI" id="CHEBI:57856"/>
        <dbReference type="ChEBI" id="CHEBI:59789"/>
        <dbReference type="ChEBI" id="CHEBI:73542"/>
        <dbReference type="ChEBI" id="CHEBI:74269"/>
        <dbReference type="EC" id="2.1.1.228"/>
    </reaction>
</comment>
<comment type="subunit">
    <text evidence="1">Homodimer.</text>
</comment>
<comment type="subcellular location">
    <subcellularLocation>
        <location evidence="1">Cytoplasm</location>
    </subcellularLocation>
</comment>
<comment type="similarity">
    <text evidence="1">Belongs to the RNA methyltransferase TrmD family.</text>
</comment>
<keyword id="KW-0963">Cytoplasm</keyword>
<keyword id="KW-0489">Methyltransferase</keyword>
<keyword id="KW-0949">S-adenosyl-L-methionine</keyword>
<keyword id="KW-0808">Transferase</keyword>
<keyword id="KW-0819">tRNA processing</keyword>
<reference key="1">
    <citation type="journal article" date="2010" name="Genome Biol.">
        <title>Structure and dynamics of the pan-genome of Streptococcus pneumoniae and closely related species.</title>
        <authorList>
            <person name="Donati C."/>
            <person name="Hiller N.L."/>
            <person name="Tettelin H."/>
            <person name="Muzzi A."/>
            <person name="Croucher N.J."/>
            <person name="Angiuoli S.V."/>
            <person name="Oggioni M."/>
            <person name="Dunning Hotopp J.C."/>
            <person name="Hu F.Z."/>
            <person name="Riley D.R."/>
            <person name="Covacci A."/>
            <person name="Mitchell T.J."/>
            <person name="Bentley S.D."/>
            <person name="Kilian M."/>
            <person name="Ehrlich G.D."/>
            <person name="Rappuoli R."/>
            <person name="Moxon E.R."/>
            <person name="Masignani V."/>
        </authorList>
    </citation>
    <scope>NUCLEOTIDE SEQUENCE [LARGE SCALE GENOMIC DNA]</scope>
    <source>
        <strain>Hungary19A-6</strain>
    </source>
</reference>
<dbReference type="EC" id="2.1.1.228" evidence="1"/>
<dbReference type="EMBL" id="CP000936">
    <property type="protein sequence ID" value="ACA36211.1"/>
    <property type="molecule type" value="Genomic_DNA"/>
</dbReference>
<dbReference type="RefSeq" id="WP_000686921.1">
    <property type="nucleotide sequence ID" value="NC_010380.1"/>
</dbReference>
<dbReference type="SMR" id="B1IAV3"/>
<dbReference type="KEGG" id="spv:SPH_0877"/>
<dbReference type="HOGENOM" id="CLU_047363_0_1_9"/>
<dbReference type="Proteomes" id="UP000002163">
    <property type="component" value="Chromosome"/>
</dbReference>
<dbReference type="GO" id="GO:0005829">
    <property type="term" value="C:cytosol"/>
    <property type="evidence" value="ECO:0007669"/>
    <property type="project" value="TreeGrafter"/>
</dbReference>
<dbReference type="GO" id="GO:0052906">
    <property type="term" value="F:tRNA (guanine(37)-N1)-methyltransferase activity"/>
    <property type="evidence" value="ECO:0007669"/>
    <property type="project" value="UniProtKB-UniRule"/>
</dbReference>
<dbReference type="GO" id="GO:0002939">
    <property type="term" value="P:tRNA N1-guanine methylation"/>
    <property type="evidence" value="ECO:0007669"/>
    <property type="project" value="TreeGrafter"/>
</dbReference>
<dbReference type="CDD" id="cd18080">
    <property type="entry name" value="TrmD-like"/>
    <property type="match status" value="1"/>
</dbReference>
<dbReference type="FunFam" id="1.10.1270.20:FF:000001">
    <property type="entry name" value="tRNA (guanine-N(1)-)-methyltransferase"/>
    <property type="match status" value="1"/>
</dbReference>
<dbReference type="FunFam" id="3.40.1280.10:FF:000001">
    <property type="entry name" value="tRNA (guanine-N(1)-)-methyltransferase"/>
    <property type="match status" value="1"/>
</dbReference>
<dbReference type="Gene3D" id="3.40.1280.10">
    <property type="match status" value="1"/>
</dbReference>
<dbReference type="Gene3D" id="1.10.1270.20">
    <property type="entry name" value="tRNA(m1g37)methyltransferase, domain 2"/>
    <property type="match status" value="1"/>
</dbReference>
<dbReference type="HAMAP" id="MF_00605">
    <property type="entry name" value="TrmD"/>
    <property type="match status" value="1"/>
</dbReference>
<dbReference type="InterPro" id="IPR029028">
    <property type="entry name" value="Alpha/beta_knot_MTases"/>
</dbReference>
<dbReference type="InterPro" id="IPR023148">
    <property type="entry name" value="tRNA_m1G_MeTrfase_C_sf"/>
</dbReference>
<dbReference type="InterPro" id="IPR002649">
    <property type="entry name" value="tRNA_m1G_MeTrfase_TrmD"/>
</dbReference>
<dbReference type="InterPro" id="IPR029026">
    <property type="entry name" value="tRNA_m1G_MTases_N"/>
</dbReference>
<dbReference type="InterPro" id="IPR016009">
    <property type="entry name" value="tRNA_MeTrfase_TRMD/TRM10"/>
</dbReference>
<dbReference type="NCBIfam" id="NF000648">
    <property type="entry name" value="PRK00026.1"/>
    <property type="match status" value="1"/>
</dbReference>
<dbReference type="NCBIfam" id="TIGR00088">
    <property type="entry name" value="trmD"/>
    <property type="match status" value="1"/>
</dbReference>
<dbReference type="PANTHER" id="PTHR46417">
    <property type="entry name" value="TRNA (GUANINE-N(1)-)-METHYLTRANSFERASE"/>
    <property type="match status" value="1"/>
</dbReference>
<dbReference type="PANTHER" id="PTHR46417:SF1">
    <property type="entry name" value="TRNA (GUANINE-N(1)-)-METHYLTRANSFERASE"/>
    <property type="match status" value="1"/>
</dbReference>
<dbReference type="Pfam" id="PF01746">
    <property type="entry name" value="tRNA_m1G_MT"/>
    <property type="match status" value="1"/>
</dbReference>
<dbReference type="PIRSF" id="PIRSF000386">
    <property type="entry name" value="tRNA_mtase"/>
    <property type="match status" value="1"/>
</dbReference>
<dbReference type="SUPFAM" id="SSF75217">
    <property type="entry name" value="alpha/beta knot"/>
    <property type="match status" value="1"/>
</dbReference>
<organism>
    <name type="scientific">Streptococcus pneumoniae (strain Hungary19A-6)</name>
    <dbReference type="NCBI Taxonomy" id="487214"/>
    <lineage>
        <taxon>Bacteria</taxon>
        <taxon>Bacillati</taxon>
        <taxon>Bacillota</taxon>
        <taxon>Bacilli</taxon>
        <taxon>Lactobacillales</taxon>
        <taxon>Streptococcaceae</taxon>
        <taxon>Streptococcus</taxon>
    </lineage>
</organism>
<name>TRMD_STRPI</name>
<protein>
    <recommendedName>
        <fullName evidence="1">tRNA (guanine-N(1)-)-methyltransferase</fullName>
        <ecNumber evidence="1">2.1.1.228</ecNumber>
    </recommendedName>
    <alternativeName>
        <fullName evidence="1">M1G-methyltransferase</fullName>
    </alternativeName>
    <alternativeName>
        <fullName evidence="1">tRNA [GM37] methyltransferase</fullName>
    </alternativeName>
</protein>
<feature type="chain" id="PRO_1000130215" description="tRNA (guanine-N(1)-)-methyltransferase">
    <location>
        <begin position="1"/>
        <end position="239"/>
    </location>
</feature>
<feature type="binding site" evidence="1">
    <location>
        <position position="108"/>
    </location>
    <ligand>
        <name>S-adenosyl-L-methionine</name>
        <dbReference type="ChEBI" id="CHEBI:59789"/>
    </ligand>
</feature>
<feature type="binding site" evidence="1">
    <location>
        <begin position="127"/>
        <end position="132"/>
    </location>
    <ligand>
        <name>S-adenosyl-L-methionine</name>
        <dbReference type="ChEBI" id="CHEBI:59789"/>
    </ligand>
</feature>
<proteinExistence type="inferred from homology"/>
<evidence type="ECO:0000255" key="1">
    <source>
        <dbReference type="HAMAP-Rule" id="MF_00605"/>
    </source>
</evidence>
<accession>B1IAV3</accession>
<sequence length="239" mass="27633">MKIDILTLFPEMFSPLEHSIVGKAREKGLLDIQYHNFRENAEKARHVDDEPYGGGQGMLLRAQPIFDSFDAIEKKNPRVILLDPAGKQFDQAYAEDLAQEEELIFICGHYEGYDERIKTLVTDEISLGDYVLTGGELAAMTMIDATVRLIPEVIGKESSHQDDSFSSGLLEYPQYTRPYDYRGMVVPDVLMSGHHEKIRQWRLYESLKKTYERRPDLLEHYQLTVEEEKMLAEIKENKE</sequence>
<gene>
    <name evidence="1" type="primary">trmD</name>
    <name type="ordered locus">SPH_0877</name>
</gene>